<protein>
    <recommendedName>
        <fullName evidence="1">Xanthine phosphoribosyltransferase</fullName>
        <shortName evidence="1">XPRTase</shortName>
        <ecNumber evidence="1">2.4.2.22</ecNumber>
    </recommendedName>
</protein>
<proteinExistence type="inferred from homology"/>
<keyword id="KW-0963">Cytoplasm</keyword>
<keyword id="KW-0328">Glycosyltransferase</keyword>
<keyword id="KW-0660">Purine salvage</keyword>
<keyword id="KW-0808">Transferase</keyword>
<reference key="1">
    <citation type="journal article" date="2006" name="J. Bacteriol.">
        <title>Pathogenomic sequence analysis of Bacillus cereus and Bacillus thuringiensis isolates closely related to Bacillus anthracis.</title>
        <authorList>
            <person name="Han C.S."/>
            <person name="Xie G."/>
            <person name="Challacombe J.F."/>
            <person name="Altherr M.R."/>
            <person name="Bhotika S.S."/>
            <person name="Bruce D."/>
            <person name="Campbell C.S."/>
            <person name="Campbell M.L."/>
            <person name="Chen J."/>
            <person name="Chertkov O."/>
            <person name="Cleland C."/>
            <person name="Dimitrijevic M."/>
            <person name="Doggett N.A."/>
            <person name="Fawcett J.J."/>
            <person name="Glavina T."/>
            <person name="Goodwin L.A."/>
            <person name="Hill K.K."/>
            <person name="Hitchcock P."/>
            <person name="Jackson P.J."/>
            <person name="Keim P."/>
            <person name="Kewalramani A.R."/>
            <person name="Longmire J."/>
            <person name="Lucas S."/>
            <person name="Malfatti S."/>
            <person name="McMurry K."/>
            <person name="Meincke L.J."/>
            <person name="Misra M."/>
            <person name="Moseman B.L."/>
            <person name="Mundt M."/>
            <person name="Munk A.C."/>
            <person name="Okinaka R.T."/>
            <person name="Parson-Quintana B."/>
            <person name="Reilly L.P."/>
            <person name="Richardson P."/>
            <person name="Robinson D.L."/>
            <person name="Rubin E."/>
            <person name="Saunders E."/>
            <person name="Tapia R."/>
            <person name="Tesmer J.G."/>
            <person name="Thayer N."/>
            <person name="Thompson L.S."/>
            <person name="Tice H."/>
            <person name="Ticknor L.O."/>
            <person name="Wills P.L."/>
            <person name="Brettin T.S."/>
            <person name="Gilna P."/>
        </authorList>
    </citation>
    <scope>NUCLEOTIDE SEQUENCE [LARGE SCALE GENOMIC DNA]</scope>
    <source>
        <strain>97-27</strain>
    </source>
</reference>
<dbReference type="EC" id="2.4.2.22" evidence="1"/>
<dbReference type="EMBL" id="AE017355">
    <property type="protein sequence ID" value="AAT63180.1"/>
    <property type="molecule type" value="Genomic_DNA"/>
</dbReference>
<dbReference type="RefSeq" id="WP_000866485.1">
    <property type="nucleotide sequence ID" value="NC_005957.1"/>
</dbReference>
<dbReference type="RefSeq" id="YP_035781.1">
    <property type="nucleotide sequence ID" value="NC_005957.1"/>
</dbReference>
<dbReference type="SMR" id="Q6HKZ0"/>
<dbReference type="KEGG" id="btk:BT9727_1447"/>
<dbReference type="PATRIC" id="fig|281309.8.peg.1521"/>
<dbReference type="HOGENOM" id="CLU_099015_0_0_9"/>
<dbReference type="UniPathway" id="UPA00602">
    <property type="reaction ID" value="UER00658"/>
</dbReference>
<dbReference type="Proteomes" id="UP000001301">
    <property type="component" value="Chromosome"/>
</dbReference>
<dbReference type="GO" id="GO:0005737">
    <property type="term" value="C:cytoplasm"/>
    <property type="evidence" value="ECO:0007669"/>
    <property type="project" value="UniProtKB-SubCell"/>
</dbReference>
<dbReference type="GO" id="GO:0000310">
    <property type="term" value="F:xanthine phosphoribosyltransferase activity"/>
    <property type="evidence" value="ECO:0007669"/>
    <property type="project" value="UniProtKB-UniRule"/>
</dbReference>
<dbReference type="GO" id="GO:0006166">
    <property type="term" value="P:purine ribonucleoside salvage"/>
    <property type="evidence" value="ECO:0007669"/>
    <property type="project" value="UniProtKB-KW"/>
</dbReference>
<dbReference type="GO" id="GO:0046110">
    <property type="term" value="P:xanthine metabolic process"/>
    <property type="evidence" value="ECO:0007669"/>
    <property type="project" value="InterPro"/>
</dbReference>
<dbReference type="GO" id="GO:0032265">
    <property type="term" value="P:XMP salvage"/>
    <property type="evidence" value="ECO:0007669"/>
    <property type="project" value="UniProtKB-UniRule"/>
</dbReference>
<dbReference type="CDD" id="cd06223">
    <property type="entry name" value="PRTases_typeI"/>
    <property type="match status" value="1"/>
</dbReference>
<dbReference type="Gene3D" id="3.40.50.2020">
    <property type="match status" value="1"/>
</dbReference>
<dbReference type="HAMAP" id="MF_01184">
    <property type="entry name" value="XPRTase"/>
    <property type="match status" value="1"/>
</dbReference>
<dbReference type="InterPro" id="IPR000836">
    <property type="entry name" value="PRibTrfase_dom"/>
</dbReference>
<dbReference type="InterPro" id="IPR029057">
    <property type="entry name" value="PRTase-like"/>
</dbReference>
<dbReference type="InterPro" id="IPR050118">
    <property type="entry name" value="Pur/Pyrimidine_PRTase"/>
</dbReference>
<dbReference type="InterPro" id="IPR010079">
    <property type="entry name" value="Xanthine_PRibTrfase"/>
</dbReference>
<dbReference type="NCBIfam" id="NF006671">
    <property type="entry name" value="PRK09219.1"/>
    <property type="match status" value="1"/>
</dbReference>
<dbReference type="NCBIfam" id="TIGR01744">
    <property type="entry name" value="XPRTase"/>
    <property type="match status" value="1"/>
</dbReference>
<dbReference type="PANTHER" id="PTHR43864">
    <property type="entry name" value="HYPOXANTHINE/GUANINE PHOSPHORIBOSYLTRANSFERASE"/>
    <property type="match status" value="1"/>
</dbReference>
<dbReference type="PANTHER" id="PTHR43864:SF1">
    <property type="entry name" value="XANTHINE PHOSPHORIBOSYLTRANSFERASE"/>
    <property type="match status" value="1"/>
</dbReference>
<dbReference type="Pfam" id="PF00156">
    <property type="entry name" value="Pribosyltran"/>
    <property type="match status" value="1"/>
</dbReference>
<dbReference type="SUPFAM" id="SSF53271">
    <property type="entry name" value="PRTase-like"/>
    <property type="match status" value="1"/>
</dbReference>
<name>XPT_BACHK</name>
<comment type="function">
    <text evidence="1">Converts the preformed base xanthine, a product of nucleic acid breakdown, to xanthosine 5'-monophosphate (XMP), so it can be reused for RNA or DNA synthesis.</text>
</comment>
<comment type="catalytic activity">
    <reaction evidence="1">
        <text>XMP + diphosphate = xanthine + 5-phospho-alpha-D-ribose 1-diphosphate</text>
        <dbReference type="Rhea" id="RHEA:10800"/>
        <dbReference type="ChEBI" id="CHEBI:17712"/>
        <dbReference type="ChEBI" id="CHEBI:33019"/>
        <dbReference type="ChEBI" id="CHEBI:57464"/>
        <dbReference type="ChEBI" id="CHEBI:58017"/>
        <dbReference type="EC" id="2.4.2.22"/>
    </reaction>
</comment>
<comment type="pathway">
    <text evidence="1">Purine metabolism; XMP biosynthesis via salvage pathway; XMP from xanthine: step 1/1.</text>
</comment>
<comment type="subunit">
    <text evidence="1">Homodimer.</text>
</comment>
<comment type="subcellular location">
    <subcellularLocation>
        <location evidence="1">Cytoplasm</location>
    </subcellularLocation>
</comment>
<comment type="similarity">
    <text evidence="1">Belongs to the purine/pyrimidine phosphoribosyltransferase family. Xpt subfamily.</text>
</comment>
<accession>Q6HKZ0</accession>
<gene>
    <name evidence="1" type="primary">xpt</name>
    <name type="ordered locus">BT9727_1447</name>
</gene>
<sequence>MKVLQEKILNEGKVLSGDVLKVDAFLNHQIDPVLMQEIGKEFAKRFKEENITKIVTIESSGIAPAVMAALELGVKVIFARKRKSLTLQDNMYVANVYSFTKQETNEISLSRNHIDESDRVLIIDDFLANGQAALGLMSLVEQAGASIAGIGIVIEKAFQDGGKKLREQGIRVESLAEIASLDNNAVTFVQQETAEVK</sequence>
<organism>
    <name type="scientific">Bacillus thuringiensis subsp. konkukian (strain 97-27)</name>
    <dbReference type="NCBI Taxonomy" id="281309"/>
    <lineage>
        <taxon>Bacteria</taxon>
        <taxon>Bacillati</taxon>
        <taxon>Bacillota</taxon>
        <taxon>Bacilli</taxon>
        <taxon>Bacillales</taxon>
        <taxon>Bacillaceae</taxon>
        <taxon>Bacillus</taxon>
        <taxon>Bacillus cereus group</taxon>
    </lineage>
</organism>
<feature type="chain" id="PRO_0000339669" description="Xanthine phosphoribosyltransferase">
    <location>
        <begin position="1"/>
        <end position="197"/>
    </location>
</feature>
<feature type="binding site" evidence="1">
    <location>
        <position position="20"/>
    </location>
    <ligand>
        <name>xanthine</name>
        <dbReference type="ChEBI" id="CHEBI:17712"/>
    </ligand>
</feature>
<feature type="binding site" evidence="1">
    <location>
        <position position="27"/>
    </location>
    <ligand>
        <name>xanthine</name>
        <dbReference type="ChEBI" id="CHEBI:17712"/>
    </ligand>
</feature>
<feature type="binding site" evidence="1">
    <location>
        <begin position="128"/>
        <end position="132"/>
    </location>
    <ligand>
        <name>5-phospho-alpha-D-ribose 1-diphosphate</name>
        <dbReference type="ChEBI" id="CHEBI:58017"/>
    </ligand>
</feature>
<feature type="binding site" evidence="1">
    <location>
        <position position="156"/>
    </location>
    <ligand>
        <name>xanthine</name>
        <dbReference type="ChEBI" id="CHEBI:17712"/>
    </ligand>
</feature>
<evidence type="ECO:0000255" key="1">
    <source>
        <dbReference type="HAMAP-Rule" id="MF_01184"/>
    </source>
</evidence>